<dbReference type="EMBL" id="CP001396">
    <property type="protein sequence ID" value="ACR62124.1"/>
    <property type="molecule type" value="Genomic_DNA"/>
</dbReference>
<dbReference type="SMR" id="C4ZZ87"/>
<dbReference type="KEGG" id="ebw:BWG_1544"/>
<dbReference type="HOGENOM" id="CLU_167445_0_0_6"/>
<dbReference type="GO" id="GO:0003677">
    <property type="term" value="F:DNA binding"/>
    <property type="evidence" value="ECO:0007669"/>
    <property type="project" value="UniProtKB-UniRule"/>
</dbReference>
<dbReference type="GO" id="GO:0051301">
    <property type="term" value="P:cell division"/>
    <property type="evidence" value="ECO:0007669"/>
    <property type="project" value="UniProtKB-UniRule"/>
</dbReference>
<dbReference type="FunFam" id="3.30.730.20:FF:000001">
    <property type="entry name" value="Cell division activator CedA"/>
    <property type="match status" value="1"/>
</dbReference>
<dbReference type="Gene3D" id="3.30.730.20">
    <property type="entry name" value="Cell division activator CedA"/>
    <property type="match status" value="1"/>
</dbReference>
<dbReference type="HAMAP" id="MF_01580">
    <property type="entry name" value="CedA"/>
    <property type="match status" value="1"/>
</dbReference>
<dbReference type="InterPro" id="IPR038463">
    <property type="entry name" value="CedA-like_sf"/>
</dbReference>
<dbReference type="InterPro" id="IPR019666">
    <property type="entry name" value="Cell_div_activator_CedA"/>
</dbReference>
<dbReference type="NCBIfam" id="NF007510">
    <property type="entry name" value="PRK10113.1"/>
    <property type="match status" value="1"/>
</dbReference>
<dbReference type="Pfam" id="PF10729">
    <property type="entry name" value="CedA"/>
    <property type="match status" value="1"/>
</dbReference>
<organism>
    <name type="scientific">Escherichia coli (strain K12 / MC4100 / BW2952)</name>
    <dbReference type="NCBI Taxonomy" id="595496"/>
    <lineage>
        <taxon>Bacteria</taxon>
        <taxon>Pseudomonadati</taxon>
        <taxon>Pseudomonadota</taxon>
        <taxon>Gammaproteobacteria</taxon>
        <taxon>Enterobacterales</taxon>
        <taxon>Enterobacteriaceae</taxon>
        <taxon>Escherichia</taxon>
    </lineage>
</organism>
<keyword id="KW-0131">Cell cycle</keyword>
<keyword id="KW-0132">Cell division</keyword>
<keyword id="KW-0238">DNA-binding</keyword>
<accession>C4ZZ87</accession>
<evidence type="ECO:0000255" key="1">
    <source>
        <dbReference type="HAMAP-Rule" id="MF_01580"/>
    </source>
</evidence>
<feature type="chain" id="PRO_1000215617" description="Cell division activator CedA">
    <location>
        <begin position="1"/>
        <end position="80"/>
    </location>
</feature>
<reference key="1">
    <citation type="journal article" date="2009" name="J. Bacteriol.">
        <title>Genomic sequencing reveals regulatory mutations and recombinational events in the widely used MC4100 lineage of Escherichia coli K-12.</title>
        <authorList>
            <person name="Ferenci T."/>
            <person name="Zhou Z."/>
            <person name="Betteridge T."/>
            <person name="Ren Y."/>
            <person name="Liu Y."/>
            <person name="Feng L."/>
            <person name="Reeves P.R."/>
            <person name="Wang L."/>
        </authorList>
    </citation>
    <scope>NUCLEOTIDE SEQUENCE [LARGE SCALE GENOMIC DNA]</scope>
    <source>
        <strain>K12 / MC4100 / BW2952</strain>
    </source>
</reference>
<sequence length="80" mass="9377">MKKPLRQQNRQIISYVPRTEPAPPEHAIKMDSFRDVWMLRGKYVAFVLMGESFLRSPAFTVPESAQRWANQIRQEGEVTE</sequence>
<name>CEDA_ECOBW</name>
<gene>
    <name evidence="1" type="primary">cedA</name>
    <name type="ordered locus">BWG_1544</name>
</gene>
<comment type="function">
    <text evidence="1">Activates the cell division inhibited by chromosomal DNA over-replication.</text>
</comment>
<comment type="similarity">
    <text evidence="1">Belongs to the CedA family.</text>
</comment>
<protein>
    <recommendedName>
        <fullName evidence="1">Cell division activator CedA</fullName>
    </recommendedName>
</protein>
<proteinExistence type="inferred from homology"/>